<evidence type="ECO:0000255" key="1">
    <source>
        <dbReference type="HAMAP-Rule" id="MF_01629"/>
    </source>
</evidence>
<feature type="chain" id="PRO_0000167717" description="Pyridoxine/pyridoxamine 5'-phosphate oxidase">
    <location>
        <begin position="1"/>
        <end position="214"/>
    </location>
</feature>
<feature type="binding site" evidence="1">
    <location>
        <begin position="9"/>
        <end position="12"/>
    </location>
    <ligand>
        <name>substrate</name>
    </ligand>
</feature>
<feature type="binding site" evidence="1">
    <location>
        <begin position="62"/>
        <end position="67"/>
    </location>
    <ligand>
        <name>FMN</name>
        <dbReference type="ChEBI" id="CHEBI:58210"/>
    </ligand>
</feature>
<feature type="binding site" evidence="1">
    <location>
        <position position="67"/>
    </location>
    <ligand>
        <name>substrate</name>
    </ligand>
</feature>
<feature type="binding site" evidence="1">
    <location>
        <begin position="77"/>
        <end position="78"/>
    </location>
    <ligand>
        <name>FMN</name>
        <dbReference type="ChEBI" id="CHEBI:58210"/>
    </ligand>
</feature>
<feature type="binding site" evidence="1">
    <location>
        <position position="83"/>
    </location>
    <ligand>
        <name>FMN</name>
        <dbReference type="ChEBI" id="CHEBI:58210"/>
    </ligand>
</feature>
<feature type="binding site" evidence="1">
    <location>
        <position position="84"/>
    </location>
    <ligand>
        <name>FMN</name>
        <dbReference type="ChEBI" id="CHEBI:58210"/>
    </ligand>
</feature>
<feature type="binding site" evidence="1">
    <location>
        <position position="106"/>
    </location>
    <ligand>
        <name>FMN</name>
        <dbReference type="ChEBI" id="CHEBI:58210"/>
    </ligand>
</feature>
<feature type="binding site" evidence="1">
    <location>
        <position position="124"/>
    </location>
    <ligand>
        <name>substrate</name>
    </ligand>
</feature>
<feature type="binding site" evidence="1">
    <location>
        <position position="128"/>
    </location>
    <ligand>
        <name>substrate</name>
    </ligand>
</feature>
<feature type="binding site" evidence="1">
    <location>
        <position position="132"/>
    </location>
    <ligand>
        <name>substrate</name>
    </ligand>
</feature>
<feature type="binding site" evidence="1">
    <location>
        <begin position="141"/>
        <end position="142"/>
    </location>
    <ligand>
        <name>FMN</name>
        <dbReference type="ChEBI" id="CHEBI:58210"/>
    </ligand>
</feature>
<feature type="binding site" evidence="1">
    <location>
        <position position="186"/>
    </location>
    <ligand>
        <name>FMN</name>
        <dbReference type="ChEBI" id="CHEBI:58210"/>
    </ligand>
</feature>
<feature type="binding site" evidence="1">
    <location>
        <begin position="192"/>
        <end position="194"/>
    </location>
    <ligand>
        <name>substrate</name>
    </ligand>
</feature>
<feature type="binding site" evidence="1">
    <location>
        <position position="196"/>
    </location>
    <ligand>
        <name>FMN</name>
        <dbReference type="ChEBI" id="CHEBI:58210"/>
    </ligand>
</feature>
<name>PDXH_LEPIN</name>
<organism>
    <name type="scientific">Leptospira interrogans serogroup Icterohaemorrhagiae serovar Lai (strain 56601)</name>
    <dbReference type="NCBI Taxonomy" id="189518"/>
    <lineage>
        <taxon>Bacteria</taxon>
        <taxon>Pseudomonadati</taxon>
        <taxon>Spirochaetota</taxon>
        <taxon>Spirochaetia</taxon>
        <taxon>Leptospirales</taxon>
        <taxon>Leptospiraceae</taxon>
        <taxon>Leptospira</taxon>
    </lineage>
</organism>
<reference key="1">
    <citation type="journal article" date="2003" name="Nature">
        <title>Unique physiological and pathogenic features of Leptospira interrogans revealed by whole-genome sequencing.</title>
        <authorList>
            <person name="Ren S.-X."/>
            <person name="Fu G."/>
            <person name="Jiang X.-G."/>
            <person name="Zeng R."/>
            <person name="Miao Y.-G."/>
            <person name="Xu H."/>
            <person name="Zhang Y.-X."/>
            <person name="Xiong H."/>
            <person name="Lu G."/>
            <person name="Lu L.-F."/>
            <person name="Jiang H.-Q."/>
            <person name="Jia J."/>
            <person name="Tu Y.-F."/>
            <person name="Jiang J.-X."/>
            <person name="Gu W.-Y."/>
            <person name="Zhang Y.-Q."/>
            <person name="Cai Z."/>
            <person name="Sheng H.-H."/>
            <person name="Yin H.-F."/>
            <person name="Zhang Y."/>
            <person name="Zhu G.-F."/>
            <person name="Wan M."/>
            <person name="Huang H.-L."/>
            <person name="Qian Z."/>
            <person name="Wang S.-Y."/>
            <person name="Ma W."/>
            <person name="Yao Z.-J."/>
            <person name="Shen Y."/>
            <person name="Qiang B.-Q."/>
            <person name="Xia Q.-C."/>
            <person name="Guo X.-K."/>
            <person name="Danchin A."/>
            <person name="Saint Girons I."/>
            <person name="Somerville R.L."/>
            <person name="Wen Y.-M."/>
            <person name="Shi M.-H."/>
            <person name="Chen Z."/>
            <person name="Xu J.-G."/>
            <person name="Zhao G.-P."/>
        </authorList>
    </citation>
    <scope>NUCLEOTIDE SEQUENCE [LARGE SCALE GENOMIC DNA]</scope>
    <source>
        <strain>56601</strain>
    </source>
</reference>
<protein>
    <recommendedName>
        <fullName evidence="1">Pyridoxine/pyridoxamine 5'-phosphate oxidase</fullName>
        <ecNumber evidence="1">1.4.3.5</ecNumber>
    </recommendedName>
    <alternativeName>
        <fullName evidence="1">PNP/PMP oxidase</fullName>
        <shortName evidence="1">PNPOx</shortName>
    </alternativeName>
    <alternativeName>
        <fullName evidence="1">Pyridoxal 5'-phosphate synthase</fullName>
    </alternativeName>
</protein>
<gene>
    <name evidence="1" type="primary">pdxH</name>
    <name type="ordered locus">LA_1166</name>
</gene>
<comment type="function">
    <text evidence="1">Catalyzes the oxidation of either pyridoxine 5'-phosphate (PNP) or pyridoxamine 5'-phosphate (PMP) into pyridoxal 5'-phosphate (PLP).</text>
</comment>
<comment type="catalytic activity">
    <reaction evidence="1">
        <text>pyridoxamine 5'-phosphate + O2 + H2O = pyridoxal 5'-phosphate + H2O2 + NH4(+)</text>
        <dbReference type="Rhea" id="RHEA:15817"/>
        <dbReference type="ChEBI" id="CHEBI:15377"/>
        <dbReference type="ChEBI" id="CHEBI:15379"/>
        <dbReference type="ChEBI" id="CHEBI:16240"/>
        <dbReference type="ChEBI" id="CHEBI:28938"/>
        <dbReference type="ChEBI" id="CHEBI:58451"/>
        <dbReference type="ChEBI" id="CHEBI:597326"/>
        <dbReference type="EC" id="1.4.3.5"/>
    </reaction>
</comment>
<comment type="catalytic activity">
    <reaction evidence="1">
        <text>pyridoxine 5'-phosphate + O2 = pyridoxal 5'-phosphate + H2O2</text>
        <dbReference type="Rhea" id="RHEA:15149"/>
        <dbReference type="ChEBI" id="CHEBI:15379"/>
        <dbReference type="ChEBI" id="CHEBI:16240"/>
        <dbReference type="ChEBI" id="CHEBI:58589"/>
        <dbReference type="ChEBI" id="CHEBI:597326"/>
        <dbReference type="EC" id="1.4.3.5"/>
    </reaction>
</comment>
<comment type="cofactor">
    <cofactor evidence="1">
        <name>FMN</name>
        <dbReference type="ChEBI" id="CHEBI:58210"/>
    </cofactor>
    <text evidence="1">Binds 1 FMN per subunit.</text>
</comment>
<comment type="pathway">
    <text evidence="1">Cofactor metabolism; pyridoxal 5'-phosphate salvage; pyridoxal 5'-phosphate from pyridoxamine 5'-phosphate: step 1/1.</text>
</comment>
<comment type="pathway">
    <text evidence="1">Cofactor metabolism; pyridoxal 5'-phosphate salvage; pyridoxal 5'-phosphate from pyridoxine 5'-phosphate: step 1/1.</text>
</comment>
<comment type="subunit">
    <text evidence="1">Homodimer.</text>
</comment>
<comment type="similarity">
    <text evidence="1">Belongs to the pyridoxamine 5'-phosphate oxidase family.</text>
</comment>
<keyword id="KW-0285">Flavoprotein</keyword>
<keyword id="KW-0288">FMN</keyword>
<keyword id="KW-0560">Oxidoreductase</keyword>
<keyword id="KW-0664">Pyridoxine biosynthesis</keyword>
<keyword id="KW-1185">Reference proteome</keyword>
<sequence>MDPKISEIRKSYTLSSLEIEDAGSDPVLFFQKWFEEAVQSEVLEVNAMTLATVTQDGKPDARIVLLKGILKESFLFYTNYESRKGTELETNPNVCLVFFWPELERQVRIEGNVTKVSREVSKEYFHSRPRESQIGALASPQSQKIPDRKFLEGRFQKFTNQYQNKEVDLPNHWGGYAVYPCRIEFWQGRSSRLHDRIVFERDTSSSWEKFRIAP</sequence>
<proteinExistence type="inferred from homology"/>
<accession>Q8F6Y3</accession>
<dbReference type="EC" id="1.4.3.5" evidence="1"/>
<dbReference type="EMBL" id="AE010300">
    <property type="protein sequence ID" value="AAN48365.1"/>
    <property type="molecule type" value="Genomic_DNA"/>
</dbReference>
<dbReference type="RefSeq" id="NP_711347.1">
    <property type="nucleotide sequence ID" value="NC_004342.2"/>
</dbReference>
<dbReference type="RefSeq" id="WP_000371278.1">
    <property type="nucleotide sequence ID" value="NC_004342.2"/>
</dbReference>
<dbReference type="SMR" id="Q8F6Y3"/>
<dbReference type="FunCoup" id="Q8F6Y3">
    <property type="interactions" value="405"/>
</dbReference>
<dbReference type="STRING" id="189518.LA_1166"/>
<dbReference type="PaxDb" id="189518-LA_1166"/>
<dbReference type="EnsemblBacteria" id="AAN48365">
    <property type="protein sequence ID" value="AAN48365"/>
    <property type="gene ID" value="LA_1166"/>
</dbReference>
<dbReference type="GeneID" id="61142397"/>
<dbReference type="KEGG" id="lil:LA_1166"/>
<dbReference type="PATRIC" id="fig|189518.3.peg.1163"/>
<dbReference type="HOGENOM" id="CLU_032263_2_2_12"/>
<dbReference type="InParanoid" id="Q8F6Y3"/>
<dbReference type="OrthoDB" id="9780392at2"/>
<dbReference type="UniPathway" id="UPA01068">
    <property type="reaction ID" value="UER00304"/>
</dbReference>
<dbReference type="UniPathway" id="UPA01068">
    <property type="reaction ID" value="UER00305"/>
</dbReference>
<dbReference type="Proteomes" id="UP000001408">
    <property type="component" value="Chromosome I"/>
</dbReference>
<dbReference type="GO" id="GO:0010181">
    <property type="term" value="F:FMN binding"/>
    <property type="evidence" value="ECO:0007669"/>
    <property type="project" value="UniProtKB-UniRule"/>
</dbReference>
<dbReference type="GO" id="GO:0004733">
    <property type="term" value="F:pyridoxamine phosphate oxidase activity"/>
    <property type="evidence" value="ECO:0007669"/>
    <property type="project" value="UniProtKB-UniRule"/>
</dbReference>
<dbReference type="GO" id="GO:0008615">
    <property type="term" value="P:pyridoxine biosynthetic process"/>
    <property type="evidence" value="ECO:0007669"/>
    <property type="project" value="UniProtKB-KW"/>
</dbReference>
<dbReference type="FunFam" id="2.30.110.10:FF:000005">
    <property type="entry name" value="NAD(P)H-hydrate epimerase"/>
    <property type="match status" value="1"/>
</dbReference>
<dbReference type="Gene3D" id="2.30.110.10">
    <property type="entry name" value="Electron Transport, Fmn-binding Protein, Chain A"/>
    <property type="match status" value="1"/>
</dbReference>
<dbReference type="HAMAP" id="MF_01629">
    <property type="entry name" value="PdxH"/>
    <property type="match status" value="1"/>
</dbReference>
<dbReference type="InterPro" id="IPR000659">
    <property type="entry name" value="Pyridox_Oxase"/>
</dbReference>
<dbReference type="InterPro" id="IPR019740">
    <property type="entry name" value="Pyridox_Oxase_CS"/>
</dbReference>
<dbReference type="InterPro" id="IPR011576">
    <property type="entry name" value="Pyridox_Oxase_N"/>
</dbReference>
<dbReference type="InterPro" id="IPR019576">
    <property type="entry name" value="Pyridoxamine_oxidase_dimer_C"/>
</dbReference>
<dbReference type="InterPro" id="IPR012349">
    <property type="entry name" value="Split_barrel_FMN-bd"/>
</dbReference>
<dbReference type="NCBIfam" id="TIGR00558">
    <property type="entry name" value="pdxH"/>
    <property type="match status" value="1"/>
</dbReference>
<dbReference type="NCBIfam" id="NF004231">
    <property type="entry name" value="PRK05679.1"/>
    <property type="match status" value="1"/>
</dbReference>
<dbReference type="PANTHER" id="PTHR10851:SF0">
    <property type="entry name" value="PYRIDOXINE-5'-PHOSPHATE OXIDASE"/>
    <property type="match status" value="1"/>
</dbReference>
<dbReference type="PANTHER" id="PTHR10851">
    <property type="entry name" value="PYRIDOXINE-5-PHOSPHATE OXIDASE"/>
    <property type="match status" value="1"/>
</dbReference>
<dbReference type="Pfam" id="PF10590">
    <property type="entry name" value="PNP_phzG_C"/>
    <property type="match status" value="1"/>
</dbReference>
<dbReference type="Pfam" id="PF01243">
    <property type="entry name" value="PNPOx_N"/>
    <property type="match status" value="1"/>
</dbReference>
<dbReference type="PIRSF" id="PIRSF000190">
    <property type="entry name" value="Pyd_amn-ph_oxd"/>
    <property type="match status" value="1"/>
</dbReference>
<dbReference type="SUPFAM" id="SSF50475">
    <property type="entry name" value="FMN-binding split barrel"/>
    <property type="match status" value="1"/>
</dbReference>
<dbReference type="PROSITE" id="PS01064">
    <property type="entry name" value="PYRIDOX_OXIDASE"/>
    <property type="match status" value="1"/>
</dbReference>